<gene>
    <name type="primary">accD</name>
    <name type="synonym">accA</name>
    <name type="synonym">accDA</name>
    <name type="ordered locus">FRAAL3196</name>
</gene>
<name>ACCDA_FRAAA</name>
<comment type="function">
    <text evidence="1">Component of the acetyl coenzyme A carboxylase (ACC) complex. Biotin carboxylase (BC) catalyzes the carboxylation of biotin on its carrier protein (BCCP) and then the CO(2) group is transferred by the transcarboxylase to acetyl-CoA to form malonyl-CoA (By similarity).</text>
</comment>
<comment type="catalytic activity">
    <reaction>
        <text>N(6)-carboxybiotinyl-L-lysyl-[protein] + acetyl-CoA = N(6)-biotinyl-L-lysyl-[protein] + malonyl-CoA</text>
        <dbReference type="Rhea" id="RHEA:54728"/>
        <dbReference type="Rhea" id="RHEA-COMP:10505"/>
        <dbReference type="Rhea" id="RHEA-COMP:10506"/>
        <dbReference type="ChEBI" id="CHEBI:57288"/>
        <dbReference type="ChEBI" id="CHEBI:57384"/>
        <dbReference type="ChEBI" id="CHEBI:83144"/>
        <dbReference type="ChEBI" id="CHEBI:83145"/>
        <dbReference type="EC" id="2.1.3.15"/>
    </reaction>
</comment>
<comment type="cofactor">
    <cofactor evidence="1">
        <name>Zn(2+)</name>
        <dbReference type="ChEBI" id="CHEBI:29105"/>
    </cofactor>
    <text evidence="1">Binds 1 zinc ion per subunit.</text>
</comment>
<comment type="pathway">
    <text>Lipid metabolism; malonyl-CoA biosynthesis; malonyl-CoA from acetyl-CoA: step 1/1.</text>
</comment>
<comment type="subunit">
    <text evidence="1">Acetyl-CoA carboxylase is a heterotetramer composed of biotin carboxyl carrier protein (AccB), biotin carboxylase (AccC) and two subunits of ACCase subunit beta/alpha.</text>
</comment>
<comment type="subcellular location">
    <subcellularLocation>
        <location evidence="1">Cytoplasm</location>
    </subcellularLocation>
</comment>
<comment type="similarity">
    <text evidence="7">In the N-terminal section; belongs to the AccD/PCCB family.</text>
</comment>
<comment type="similarity">
    <text evidence="7">In the C-terminal section; belongs to the AccA family.</text>
</comment>
<organism>
    <name type="scientific">Frankia alni (strain DSM 45986 / CECT 9034 / ACN14a)</name>
    <dbReference type="NCBI Taxonomy" id="326424"/>
    <lineage>
        <taxon>Bacteria</taxon>
        <taxon>Bacillati</taxon>
        <taxon>Actinomycetota</taxon>
        <taxon>Actinomycetes</taxon>
        <taxon>Frankiales</taxon>
        <taxon>Frankiaceae</taxon>
        <taxon>Frankia</taxon>
    </lineage>
</organism>
<dbReference type="EC" id="2.1.3.15"/>
<dbReference type="EMBL" id="CT573213">
    <property type="protein sequence ID" value="CAJ61840.1"/>
    <property type="molecule type" value="Genomic_DNA"/>
</dbReference>
<dbReference type="RefSeq" id="WP_011604345.1">
    <property type="nucleotide sequence ID" value="NC_008278.1"/>
</dbReference>
<dbReference type="SMR" id="Q0RKW5"/>
<dbReference type="STRING" id="326424.FRAAL3196"/>
<dbReference type="KEGG" id="fal:FRAAL3196"/>
<dbReference type="eggNOG" id="COG0777">
    <property type="taxonomic scope" value="Bacteria"/>
</dbReference>
<dbReference type="eggNOG" id="COG0825">
    <property type="taxonomic scope" value="Bacteria"/>
</dbReference>
<dbReference type="HOGENOM" id="CLU_015486_2_0_11"/>
<dbReference type="OrthoDB" id="9772975at2"/>
<dbReference type="UniPathway" id="UPA00655">
    <property type="reaction ID" value="UER00711"/>
</dbReference>
<dbReference type="Proteomes" id="UP000000657">
    <property type="component" value="Chromosome"/>
</dbReference>
<dbReference type="GO" id="GO:0009317">
    <property type="term" value="C:acetyl-CoA carboxylase complex"/>
    <property type="evidence" value="ECO:0007669"/>
    <property type="project" value="InterPro"/>
</dbReference>
<dbReference type="GO" id="GO:0003989">
    <property type="term" value="F:acetyl-CoA carboxylase activity"/>
    <property type="evidence" value="ECO:0007669"/>
    <property type="project" value="InterPro"/>
</dbReference>
<dbReference type="GO" id="GO:0005524">
    <property type="term" value="F:ATP binding"/>
    <property type="evidence" value="ECO:0007669"/>
    <property type="project" value="UniProtKB-KW"/>
</dbReference>
<dbReference type="GO" id="GO:0016743">
    <property type="term" value="F:carboxyl- or carbamoyltransferase activity"/>
    <property type="evidence" value="ECO:0007669"/>
    <property type="project" value="UniProtKB-UniRule"/>
</dbReference>
<dbReference type="GO" id="GO:0008270">
    <property type="term" value="F:zinc ion binding"/>
    <property type="evidence" value="ECO:0007669"/>
    <property type="project" value="UniProtKB-UniRule"/>
</dbReference>
<dbReference type="GO" id="GO:0006633">
    <property type="term" value="P:fatty acid biosynthetic process"/>
    <property type="evidence" value="ECO:0007669"/>
    <property type="project" value="UniProtKB-KW"/>
</dbReference>
<dbReference type="GO" id="GO:2001295">
    <property type="term" value="P:malonyl-CoA biosynthetic process"/>
    <property type="evidence" value="ECO:0007669"/>
    <property type="project" value="UniProtKB-UniRule"/>
</dbReference>
<dbReference type="Gene3D" id="3.90.226.10">
    <property type="entry name" value="2-enoyl-CoA Hydratase, Chain A, domain 1"/>
    <property type="match status" value="2"/>
</dbReference>
<dbReference type="HAMAP" id="MF_00823">
    <property type="entry name" value="AcetylCoA_CT_alpha"/>
    <property type="match status" value="1"/>
</dbReference>
<dbReference type="HAMAP" id="MF_01395">
    <property type="entry name" value="AcetylCoA_CT_beta"/>
    <property type="match status" value="1"/>
</dbReference>
<dbReference type="InterPro" id="IPR001095">
    <property type="entry name" value="Acetyl_CoA_COase_a_su"/>
</dbReference>
<dbReference type="InterPro" id="IPR000438">
    <property type="entry name" value="Acetyl_CoA_COase_Trfase_b_su"/>
</dbReference>
<dbReference type="InterPro" id="IPR029045">
    <property type="entry name" value="ClpP/crotonase-like_dom_sf"/>
</dbReference>
<dbReference type="InterPro" id="IPR011763">
    <property type="entry name" value="COA_CT_C"/>
</dbReference>
<dbReference type="InterPro" id="IPR011762">
    <property type="entry name" value="COA_CT_N"/>
</dbReference>
<dbReference type="NCBIfam" id="TIGR00513">
    <property type="entry name" value="accA"/>
    <property type="match status" value="1"/>
</dbReference>
<dbReference type="NCBIfam" id="NF041504">
    <property type="entry name" value="AccA_sub"/>
    <property type="match status" value="1"/>
</dbReference>
<dbReference type="NCBIfam" id="TIGR00515">
    <property type="entry name" value="accD"/>
    <property type="match status" value="1"/>
</dbReference>
<dbReference type="PANTHER" id="PTHR42853">
    <property type="entry name" value="ACETYL-COENZYME A CARBOXYLASE CARBOXYL TRANSFERASE SUBUNIT ALPHA"/>
    <property type="match status" value="1"/>
</dbReference>
<dbReference type="PANTHER" id="PTHR42853:SF3">
    <property type="entry name" value="ACETYL-COENZYME A CARBOXYLASE CARBOXYL TRANSFERASE SUBUNIT ALPHA, CHLOROPLASTIC"/>
    <property type="match status" value="1"/>
</dbReference>
<dbReference type="Pfam" id="PF03255">
    <property type="entry name" value="ACCA"/>
    <property type="match status" value="1"/>
</dbReference>
<dbReference type="PRINTS" id="PR01070">
    <property type="entry name" value="ACCCTRFRASEB"/>
</dbReference>
<dbReference type="SUPFAM" id="SSF52096">
    <property type="entry name" value="ClpP/crotonase"/>
    <property type="match status" value="2"/>
</dbReference>
<dbReference type="PROSITE" id="PS50989">
    <property type="entry name" value="COA_CT_CTER"/>
    <property type="match status" value="1"/>
</dbReference>
<dbReference type="PROSITE" id="PS50980">
    <property type="entry name" value="COA_CT_NTER"/>
    <property type="match status" value="1"/>
</dbReference>
<accession>Q0RKW5</accession>
<feature type="chain" id="PRO_0000359114" description="Acetyl-coenzyme A carboxylase carboxyl transferase subunits beta/alpha">
    <location>
        <begin position="1"/>
        <end position="609"/>
    </location>
</feature>
<feature type="domain" description="CoA carboxyltransferase N-terminal" evidence="3">
    <location>
        <begin position="39"/>
        <end position="308"/>
    </location>
</feature>
<feature type="domain" description="CoA carboxyltransferase C-terminal" evidence="4">
    <location>
        <begin position="314"/>
        <end position="559"/>
    </location>
</feature>
<feature type="zinc finger region" description="C4-type" evidence="2">
    <location>
        <begin position="43"/>
        <end position="65"/>
    </location>
</feature>
<feature type="region of interest" description="Acetyl-coenzyme A carboxylase carboxyl transferase subunit beta" evidence="1">
    <location>
        <begin position="1"/>
        <end position="271"/>
    </location>
</feature>
<feature type="region of interest" description="Carboxyltransferase" evidence="5">
    <location>
        <begin position="39"/>
        <end position="559"/>
    </location>
</feature>
<feature type="region of interest" description="Acetyl-coenzyme A carboxylase carboxyl transferase subunit alpha" evidence="1">
    <location>
        <begin position="272"/>
        <end position="582"/>
    </location>
</feature>
<feature type="region of interest" description="Disordered" evidence="6">
    <location>
        <begin position="582"/>
        <end position="609"/>
    </location>
</feature>
<feature type="compositionally biased region" description="Low complexity" evidence="6">
    <location>
        <begin position="582"/>
        <end position="592"/>
    </location>
</feature>
<feature type="compositionally biased region" description="Basic and acidic residues" evidence="6">
    <location>
        <begin position="594"/>
        <end position="609"/>
    </location>
</feature>
<feature type="binding site" evidence="1">
    <location>
        <position position="43"/>
    </location>
    <ligand>
        <name>Zn(2+)</name>
        <dbReference type="ChEBI" id="CHEBI:29105"/>
    </ligand>
</feature>
<feature type="binding site" evidence="1">
    <location>
        <position position="46"/>
    </location>
    <ligand>
        <name>Zn(2+)</name>
        <dbReference type="ChEBI" id="CHEBI:29105"/>
    </ligand>
</feature>
<feature type="binding site" evidence="1">
    <location>
        <position position="62"/>
    </location>
    <ligand>
        <name>Zn(2+)</name>
        <dbReference type="ChEBI" id="CHEBI:29105"/>
    </ligand>
</feature>
<feature type="binding site" evidence="1">
    <location>
        <position position="65"/>
    </location>
    <ligand>
        <name>Zn(2+)</name>
        <dbReference type="ChEBI" id="CHEBI:29105"/>
    </ligand>
</feature>
<sequence length="609" mass="64294">MTLEATAIEATAIEATGIEATGITATAIEPTPRRSPGSSWLLCGGCGTMLYERRFAREGRVCADCSWHAPMTIQQRLDLLLDADSARPVDVPAIDGDPLEFTDTRPYRDRLRDARASTGLDEAAACVRGTIDGNPVVVVVMDFRFLGGSLGATVGEVFTRGAELALRERTPLLTVTASGGARMQEGAIALMQMAKTSQALGQLDEAGILTVSLITDPTFGGVAASFATLADVIIAEPGARLGFAGRRVIEQTIRQTLPEDFQTAEFLLTHGVVDLISPRRELRANLARLLSVSSRRADGIPRQAGRPDRAVVTDPEQLARRDAWESVRAARRLGRPTTLDYAAMILEDFTELRGDRMSADCPALVAGLGRLDGVPVAVLGTQKGHTADELRYRNFGMPTPAGYRKSARVMRLAAKLGLPVITLIDTAGAYPGVEAEEQAQAVAIAENLRLMAGLPVPVVAVVTGEGGSGGALALAFADRVLMCANAVYSVISAEGCAAILWKNPAAAPTAAAALRVDARELLRLGVVDGVIPEPDGGADADPAGTAARLREALRGALADLLPLDQMNLVTRRRARFRQFGVATPAPATAPAASDDAHESQTDRSVEATR</sequence>
<evidence type="ECO:0000250" key="1"/>
<evidence type="ECO:0000255" key="2"/>
<evidence type="ECO:0000255" key="3">
    <source>
        <dbReference type="PROSITE-ProRule" id="PRU01136"/>
    </source>
</evidence>
<evidence type="ECO:0000255" key="4">
    <source>
        <dbReference type="PROSITE-ProRule" id="PRU01137"/>
    </source>
</evidence>
<evidence type="ECO:0000255" key="5">
    <source>
        <dbReference type="PROSITE-ProRule" id="PRU01138"/>
    </source>
</evidence>
<evidence type="ECO:0000256" key="6">
    <source>
        <dbReference type="SAM" id="MobiDB-lite"/>
    </source>
</evidence>
<evidence type="ECO:0000305" key="7"/>
<proteinExistence type="inferred from homology"/>
<keyword id="KW-0067">ATP-binding</keyword>
<keyword id="KW-0963">Cytoplasm</keyword>
<keyword id="KW-0275">Fatty acid biosynthesis</keyword>
<keyword id="KW-0276">Fatty acid metabolism</keyword>
<keyword id="KW-0444">Lipid biosynthesis</keyword>
<keyword id="KW-0443">Lipid metabolism</keyword>
<keyword id="KW-0479">Metal-binding</keyword>
<keyword id="KW-0547">Nucleotide-binding</keyword>
<keyword id="KW-1185">Reference proteome</keyword>
<keyword id="KW-0808">Transferase</keyword>
<keyword id="KW-0862">Zinc</keyword>
<keyword id="KW-0863">Zinc-finger</keyword>
<reference key="1">
    <citation type="journal article" date="2007" name="Genome Res.">
        <title>Genome characteristics of facultatively symbiotic Frankia sp. strains reflect host range and host plant biogeography.</title>
        <authorList>
            <person name="Normand P."/>
            <person name="Lapierre P."/>
            <person name="Tisa L.S."/>
            <person name="Gogarten J.P."/>
            <person name="Alloisio N."/>
            <person name="Bagnarol E."/>
            <person name="Bassi C.A."/>
            <person name="Berry A.M."/>
            <person name="Bickhart D.M."/>
            <person name="Choisne N."/>
            <person name="Couloux A."/>
            <person name="Cournoyer B."/>
            <person name="Cruveiller S."/>
            <person name="Daubin V."/>
            <person name="Demange N."/>
            <person name="Francino M.P."/>
            <person name="Goltsman E."/>
            <person name="Huang Y."/>
            <person name="Kopp O.R."/>
            <person name="Labarre L."/>
            <person name="Lapidus A."/>
            <person name="Lavire C."/>
            <person name="Marechal J."/>
            <person name="Martinez M."/>
            <person name="Mastronunzio J.E."/>
            <person name="Mullin B.C."/>
            <person name="Niemann J."/>
            <person name="Pujic P."/>
            <person name="Rawnsley T."/>
            <person name="Rouy Z."/>
            <person name="Schenowitz C."/>
            <person name="Sellstedt A."/>
            <person name="Tavares F."/>
            <person name="Tomkins J.P."/>
            <person name="Vallenet D."/>
            <person name="Valverde C."/>
            <person name="Wall L.G."/>
            <person name="Wang Y."/>
            <person name="Medigue C."/>
            <person name="Benson D.R."/>
        </authorList>
    </citation>
    <scope>NUCLEOTIDE SEQUENCE [LARGE SCALE GENOMIC DNA]</scope>
    <source>
        <strain>DSM 45986 / CECT 9034 / ACN14a</strain>
    </source>
</reference>
<protein>
    <recommendedName>
        <fullName>Acetyl-coenzyme A carboxylase carboxyl transferase subunits beta/alpha</fullName>
        <shortName>ACCase subunits beta/alpha</shortName>
        <shortName>Acetyl-CoA carboxylase carboxyltransferase subunits beta/alpha</shortName>
        <ecNumber>2.1.3.15</ecNumber>
    </recommendedName>
</protein>